<organism>
    <name type="scientific">Desulfovibrio desulfuricans (strain ATCC 27774 / DSM 6949 / MB)</name>
    <dbReference type="NCBI Taxonomy" id="525146"/>
    <lineage>
        <taxon>Bacteria</taxon>
        <taxon>Pseudomonadati</taxon>
        <taxon>Thermodesulfobacteriota</taxon>
        <taxon>Desulfovibrionia</taxon>
        <taxon>Desulfovibrionales</taxon>
        <taxon>Desulfovibrionaceae</taxon>
        <taxon>Desulfovibrio</taxon>
    </lineage>
</organism>
<reference key="1">
    <citation type="submission" date="2009-01" db="EMBL/GenBank/DDBJ databases">
        <title>Complete sequence of Desulfovibrio desulfuricans subsp. desulfuricans str. ATCC 27774.</title>
        <authorList>
            <consortium name="US DOE Joint Genome Institute"/>
            <person name="Lucas S."/>
            <person name="Copeland A."/>
            <person name="Lapidus A."/>
            <person name="Glavina del Rio T."/>
            <person name="Tice H."/>
            <person name="Bruce D."/>
            <person name="Goodwin L."/>
            <person name="Pitluck S."/>
            <person name="Sims D."/>
            <person name="Lu M."/>
            <person name="Kiss H."/>
            <person name="Meineke L."/>
            <person name="Brettin T."/>
            <person name="Detter J.C."/>
            <person name="Han C."/>
            <person name="Larimer F."/>
            <person name="Land M."/>
            <person name="Hauser L."/>
            <person name="Kyrpides N."/>
            <person name="Ovchinnikova G."/>
            <person name="Hazen T.C."/>
        </authorList>
    </citation>
    <scope>NUCLEOTIDE SEQUENCE [LARGE SCALE GENOMIC DNA]</scope>
    <source>
        <strain>ATCC 27774 / DSM 6949 / MB</strain>
    </source>
</reference>
<sequence length="229" mass="25002">MDYNGVLVGLGNPGARYEGTRHNCGFALIDAFVDFGYRHGTVDEMNGGKFSCQLWRVRLPRLDGCWLAAKPQTFMNLSGQCVQPLLSWHKLKAADLVVAHDELDIPPGELRFKFGGGNAGHNGLKSITELLGTPDFYRLRMGIGRPPHKGDVTNWVLGRPQGEDAENLDHILPLALDVLFAFADKGLDSAVRLAGKTTRPRKPVRQTANAEASNNSPEASATPQNKDNT</sequence>
<accession>B8J0S9</accession>
<comment type="function">
    <text evidence="1">Hydrolyzes ribosome-free peptidyl-tRNAs (with 1 or more amino acids incorporated), which drop off the ribosome during protein synthesis, or as a result of ribosome stalling.</text>
</comment>
<comment type="function">
    <text evidence="1">Catalyzes the release of premature peptidyl moieties from peptidyl-tRNA molecules trapped in stalled 50S ribosomal subunits, and thus maintains levels of free tRNAs and 50S ribosomes.</text>
</comment>
<comment type="catalytic activity">
    <reaction evidence="1">
        <text>an N-acyl-L-alpha-aminoacyl-tRNA + H2O = an N-acyl-L-amino acid + a tRNA + H(+)</text>
        <dbReference type="Rhea" id="RHEA:54448"/>
        <dbReference type="Rhea" id="RHEA-COMP:10123"/>
        <dbReference type="Rhea" id="RHEA-COMP:13883"/>
        <dbReference type="ChEBI" id="CHEBI:15377"/>
        <dbReference type="ChEBI" id="CHEBI:15378"/>
        <dbReference type="ChEBI" id="CHEBI:59874"/>
        <dbReference type="ChEBI" id="CHEBI:78442"/>
        <dbReference type="ChEBI" id="CHEBI:138191"/>
        <dbReference type="EC" id="3.1.1.29"/>
    </reaction>
</comment>
<comment type="subunit">
    <text evidence="1">Monomer.</text>
</comment>
<comment type="subcellular location">
    <subcellularLocation>
        <location evidence="1">Cytoplasm</location>
    </subcellularLocation>
</comment>
<comment type="similarity">
    <text evidence="1">Belongs to the PTH family.</text>
</comment>
<feature type="chain" id="PRO_1000118386" description="Peptidyl-tRNA hydrolase">
    <location>
        <begin position="1"/>
        <end position="229"/>
    </location>
</feature>
<feature type="region of interest" description="Disordered" evidence="2">
    <location>
        <begin position="194"/>
        <end position="229"/>
    </location>
</feature>
<feature type="compositionally biased region" description="Low complexity" evidence="2">
    <location>
        <begin position="207"/>
        <end position="223"/>
    </location>
</feature>
<feature type="active site" description="Proton acceptor" evidence="1">
    <location>
        <position position="22"/>
    </location>
</feature>
<feature type="binding site" evidence="1">
    <location>
        <position position="17"/>
    </location>
    <ligand>
        <name>tRNA</name>
        <dbReference type="ChEBI" id="CHEBI:17843"/>
    </ligand>
</feature>
<feature type="binding site" evidence="1">
    <location>
        <position position="74"/>
    </location>
    <ligand>
        <name>tRNA</name>
        <dbReference type="ChEBI" id="CHEBI:17843"/>
    </ligand>
</feature>
<feature type="binding site" evidence="1">
    <location>
        <position position="76"/>
    </location>
    <ligand>
        <name>tRNA</name>
        <dbReference type="ChEBI" id="CHEBI:17843"/>
    </ligand>
</feature>
<feature type="binding site" evidence="1">
    <location>
        <position position="122"/>
    </location>
    <ligand>
        <name>tRNA</name>
        <dbReference type="ChEBI" id="CHEBI:17843"/>
    </ligand>
</feature>
<feature type="site" description="Discriminates between blocked and unblocked aminoacyl-tRNA" evidence="1">
    <location>
        <position position="12"/>
    </location>
</feature>
<feature type="site" description="Stabilizes the basic form of H active site to accept a proton" evidence="1">
    <location>
        <position position="101"/>
    </location>
</feature>
<name>PTH_DESDA</name>
<evidence type="ECO:0000255" key="1">
    <source>
        <dbReference type="HAMAP-Rule" id="MF_00083"/>
    </source>
</evidence>
<evidence type="ECO:0000256" key="2">
    <source>
        <dbReference type="SAM" id="MobiDB-lite"/>
    </source>
</evidence>
<gene>
    <name evidence="1" type="primary">pth</name>
    <name type="ordered locus">Ddes_1454</name>
</gene>
<keyword id="KW-0963">Cytoplasm</keyword>
<keyword id="KW-0378">Hydrolase</keyword>
<keyword id="KW-0694">RNA-binding</keyword>
<keyword id="KW-0820">tRNA-binding</keyword>
<proteinExistence type="inferred from homology"/>
<dbReference type="EC" id="3.1.1.29" evidence="1"/>
<dbReference type="EMBL" id="CP001358">
    <property type="protein sequence ID" value="ACL49356.1"/>
    <property type="molecule type" value="Genomic_DNA"/>
</dbReference>
<dbReference type="SMR" id="B8J0S9"/>
<dbReference type="STRING" id="525146.Ddes_1454"/>
<dbReference type="KEGG" id="dds:Ddes_1454"/>
<dbReference type="eggNOG" id="COG0193">
    <property type="taxonomic scope" value="Bacteria"/>
</dbReference>
<dbReference type="HOGENOM" id="CLU_062456_2_2_7"/>
<dbReference type="GO" id="GO:0005737">
    <property type="term" value="C:cytoplasm"/>
    <property type="evidence" value="ECO:0007669"/>
    <property type="project" value="UniProtKB-SubCell"/>
</dbReference>
<dbReference type="GO" id="GO:0004045">
    <property type="term" value="F:peptidyl-tRNA hydrolase activity"/>
    <property type="evidence" value="ECO:0007669"/>
    <property type="project" value="UniProtKB-UniRule"/>
</dbReference>
<dbReference type="GO" id="GO:0000049">
    <property type="term" value="F:tRNA binding"/>
    <property type="evidence" value="ECO:0007669"/>
    <property type="project" value="UniProtKB-UniRule"/>
</dbReference>
<dbReference type="GO" id="GO:0006515">
    <property type="term" value="P:protein quality control for misfolded or incompletely synthesized proteins"/>
    <property type="evidence" value="ECO:0007669"/>
    <property type="project" value="UniProtKB-UniRule"/>
</dbReference>
<dbReference type="GO" id="GO:0072344">
    <property type="term" value="P:rescue of stalled ribosome"/>
    <property type="evidence" value="ECO:0007669"/>
    <property type="project" value="UniProtKB-UniRule"/>
</dbReference>
<dbReference type="CDD" id="cd00462">
    <property type="entry name" value="PTH"/>
    <property type="match status" value="1"/>
</dbReference>
<dbReference type="Gene3D" id="3.40.50.1470">
    <property type="entry name" value="Peptidyl-tRNA hydrolase"/>
    <property type="match status" value="1"/>
</dbReference>
<dbReference type="HAMAP" id="MF_00083">
    <property type="entry name" value="Pept_tRNA_hydro_bact"/>
    <property type="match status" value="1"/>
</dbReference>
<dbReference type="InterPro" id="IPR001328">
    <property type="entry name" value="Pept_tRNA_hydro"/>
</dbReference>
<dbReference type="InterPro" id="IPR018171">
    <property type="entry name" value="Pept_tRNA_hydro_CS"/>
</dbReference>
<dbReference type="InterPro" id="IPR036416">
    <property type="entry name" value="Pept_tRNA_hydro_sf"/>
</dbReference>
<dbReference type="NCBIfam" id="TIGR00447">
    <property type="entry name" value="pth"/>
    <property type="match status" value="1"/>
</dbReference>
<dbReference type="PANTHER" id="PTHR17224">
    <property type="entry name" value="PEPTIDYL-TRNA HYDROLASE"/>
    <property type="match status" value="1"/>
</dbReference>
<dbReference type="PANTHER" id="PTHR17224:SF1">
    <property type="entry name" value="PEPTIDYL-TRNA HYDROLASE"/>
    <property type="match status" value="1"/>
</dbReference>
<dbReference type="Pfam" id="PF01195">
    <property type="entry name" value="Pept_tRNA_hydro"/>
    <property type="match status" value="1"/>
</dbReference>
<dbReference type="SUPFAM" id="SSF53178">
    <property type="entry name" value="Peptidyl-tRNA hydrolase-like"/>
    <property type="match status" value="1"/>
</dbReference>
<dbReference type="PROSITE" id="PS01195">
    <property type="entry name" value="PEPT_TRNA_HYDROL_1"/>
    <property type="match status" value="1"/>
</dbReference>
<dbReference type="PROSITE" id="PS01196">
    <property type="entry name" value="PEPT_TRNA_HYDROL_2"/>
    <property type="match status" value="1"/>
</dbReference>
<protein>
    <recommendedName>
        <fullName evidence="1">Peptidyl-tRNA hydrolase</fullName>
        <shortName evidence="1">Pth</shortName>
        <ecNumber evidence="1">3.1.1.29</ecNumber>
    </recommendedName>
</protein>